<organism>
    <name type="scientific">Streptomyces coelicolor (strain ATCC BAA-471 / A3(2) / M145)</name>
    <dbReference type="NCBI Taxonomy" id="100226"/>
    <lineage>
        <taxon>Bacteria</taxon>
        <taxon>Bacillati</taxon>
        <taxon>Actinomycetota</taxon>
        <taxon>Actinomycetes</taxon>
        <taxon>Kitasatosporales</taxon>
        <taxon>Streptomycetaceae</taxon>
        <taxon>Streptomyces</taxon>
        <taxon>Streptomyces albidoflavus group</taxon>
    </lineage>
</organism>
<dbReference type="EC" id="6.1.1.15" evidence="1"/>
<dbReference type="EMBL" id="AL939124">
    <property type="protein sequence ID" value="CAB91135.1"/>
    <property type="molecule type" value="Genomic_DNA"/>
</dbReference>
<dbReference type="RefSeq" id="NP_629827.1">
    <property type="nucleotide sequence ID" value="NC_003888.3"/>
</dbReference>
<dbReference type="RefSeq" id="WP_003973327.1">
    <property type="nucleotide sequence ID" value="NZ_VNID01000024.1"/>
</dbReference>
<dbReference type="SMR" id="Q9KYR6"/>
<dbReference type="FunCoup" id="Q9KYR6">
    <property type="interactions" value="280"/>
</dbReference>
<dbReference type="STRING" id="100226.gene:17763355"/>
<dbReference type="PaxDb" id="100226-SCO5699"/>
<dbReference type="KEGG" id="sco:SCO5699"/>
<dbReference type="PATRIC" id="fig|100226.15.peg.5788"/>
<dbReference type="eggNOG" id="COG0442">
    <property type="taxonomic scope" value="Bacteria"/>
</dbReference>
<dbReference type="HOGENOM" id="CLU_016739_0_0_11"/>
<dbReference type="InParanoid" id="Q9KYR6"/>
<dbReference type="OrthoDB" id="9809052at2"/>
<dbReference type="PhylomeDB" id="Q9KYR6"/>
<dbReference type="Proteomes" id="UP000001973">
    <property type="component" value="Chromosome"/>
</dbReference>
<dbReference type="GO" id="GO:0005829">
    <property type="term" value="C:cytosol"/>
    <property type="evidence" value="ECO:0000318"/>
    <property type="project" value="GO_Central"/>
</dbReference>
<dbReference type="GO" id="GO:0002161">
    <property type="term" value="F:aminoacyl-tRNA deacylase activity"/>
    <property type="evidence" value="ECO:0007669"/>
    <property type="project" value="InterPro"/>
</dbReference>
<dbReference type="GO" id="GO:0005524">
    <property type="term" value="F:ATP binding"/>
    <property type="evidence" value="ECO:0007669"/>
    <property type="project" value="UniProtKB-UniRule"/>
</dbReference>
<dbReference type="GO" id="GO:0004827">
    <property type="term" value="F:proline-tRNA ligase activity"/>
    <property type="evidence" value="ECO:0000318"/>
    <property type="project" value="GO_Central"/>
</dbReference>
<dbReference type="GO" id="GO:0006433">
    <property type="term" value="P:prolyl-tRNA aminoacylation"/>
    <property type="evidence" value="ECO:0000318"/>
    <property type="project" value="GO_Central"/>
</dbReference>
<dbReference type="CDD" id="cd00861">
    <property type="entry name" value="ProRS_anticodon_short"/>
    <property type="match status" value="1"/>
</dbReference>
<dbReference type="CDD" id="cd00779">
    <property type="entry name" value="ProRS_core_prok"/>
    <property type="match status" value="1"/>
</dbReference>
<dbReference type="FunFam" id="3.30.930.10:FF:000065">
    <property type="entry name" value="Proline--tRNA ligase"/>
    <property type="match status" value="1"/>
</dbReference>
<dbReference type="FunFam" id="3.30.930.10:FF:000066">
    <property type="entry name" value="Proline--tRNA ligase"/>
    <property type="match status" value="1"/>
</dbReference>
<dbReference type="Gene3D" id="3.40.50.800">
    <property type="entry name" value="Anticodon-binding domain"/>
    <property type="match status" value="1"/>
</dbReference>
<dbReference type="Gene3D" id="3.30.930.10">
    <property type="entry name" value="Bira Bifunctional Protein, Domain 2"/>
    <property type="match status" value="2"/>
</dbReference>
<dbReference type="HAMAP" id="MF_01569">
    <property type="entry name" value="Pro_tRNA_synth_type1"/>
    <property type="match status" value="1"/>
</dbReference>
<dbReference type="InterPro" id="IPR002314">
    <property type="entry name" value="aa-tRNA-synt_IIb"/>
</dbReference>
<dbReference type="InterPro" id="IPR006195">
    <property type="entry name" value="aa-tRNA-synth_II"/>
</dbReference>
<dbReference type="InterPro" id="IPR045864">
    <property type="entry name" value="aa-tRNA-synth_II/BPL/LPL"/>
</dbReference>
<dbReference type="InterPro" id="IPR004154">
    <property type="entry name" value="Anticodon-bd"/>
</dbReference>
<dbReference type="InterPro" id="IPR036621">
    <property type="entry name" value="Anticodon-bd_dom_sf"/>
</dbReference>
<dbReference type="InterPro" id="IPR002316">
    <property type="entry name" value="Pro-tRNA-ligase_IIa"/>
</dbReference>
<dbReference type="InterPro" id="IPR004500">
    <property type="entry name" value="Pro-tRNA-synth_IIa_bac-type"/>
</dbReference>
<dbReference type="InterPro" id="IPR023717">
    <property type="entry name" value="Pro-tRNA-Synthase_IIa_type1"/>
</dbReference>
<dbReference type="InterPro" id="IPR050062">
    <property type="entry name" value="Pro-tRNA_synthetase"/>
</dbReference>
<dbReference type="InterPro" id="IPR044140">
    <property type="entry name" value="ProRS_anticodon_short"/>
</dbReference>
<dbReference type="InterPro" id="IPR033730">
    <property type="entry name" value="ProRS_core_prok"/>
</dbReference>
<dbReference type="InterPro" id="IPR036754">
    <property type="entry name" value="YbaK/aa-tRNA-synt-asso_dom_sf"/>
</dbReference>
<dbReference type="InterPro" id="IPR007214">
    <property type="entry name" value="YbaK/aa-tRNA-synth-assoc-dom"/>
</dbReference>
<dbReference type="NCBIfam" id="NF006625">
    <property type="entry name" value="PRK09194.1"/>
    <property type="match status" value="1"/>
</dbReference>
<dbReference type="NCBIfam" id="TIGR00409">
    <property type="entry name" value="proS_fam_II"/>
    <property type="match status" value="1"/>
</dbReference>
<dbReference type="PANTHER" id="PTHR42753">
    <property type="entry name" value="MITOCHONDRIAL RIBOSOME PROTEIN L39/PROLYL-TRNA LIGASE FAMILY MEMBER"/>
    <property type="match status" value="1"/>
</dbReference>
<dbReference type="PANTHER" id="PTHR42753:SF2">
    <property type="entry name" value="PROLINE--TRNA LIGASE"/>
    <property type="match status" value="1"/>
</dbReference>
<dbReference type="Pfam" id="PF03129">
    <property type="entry name" value="HGTP_anticodon"/>
    <property type="match status" value="1"/>
</dbReference>
<dbReference type="Pfam" id="PF00587">
    <property type="entry name" value="tRNA-synt_2b"/>
    <property type="match status" value="1"/>
</dbReference>
<dbReference type="Pfam" id="PF04073">
    <property type="entry name" value="tRNA_edit"/>
    <property type="match status" value="1"/>
</dbReference>
<dbReference type="PRINTS" id="PR01046">
    <property type="entry name" value="TRNASYNTHPRO"/>
</dbReference>
<dbReference type="SUPFAM" id="SSF52954">
    <property type="entry name" value="Class II aaRS ABD-related"/>
    <property type="match status" value="1"/>
</dbReference>
<dbReference type="SUPFAM" id="SSF55681">
    <property type="entry name" value="Class II aaRS and biotin synthetases"/>
    <property type="match status" value="1"/>
</dbReference>
<dbReference type="SUPFAM" id="SSF55826">
    <property type="entry name" value="YbaK/ProRS associated domain"/>
    <property type="match status" value="1"/>
</dbReference>
<dbReference type="PROSITE" id="PS50862">
    <property type="entry name" value="AA_TRNA_LIGASE_II"/>
    <property type="match status" value="1"/>
</dbReference>
<feature type="chain" id="PRO_0000139346" description="Proline--tRNA ligase">
    <location>
        <begin position="1"/>
        <end position="567"/>
    </location>
</feature>
<protein>
    <recommendedName>
        <fullName evidence="1">Proline--tRNA ligase</fullName>
        <ecNumber evidence="1">6.1.1.15</ecNumber>
    </recommendedName>
    <alternativeName>
        <fullName evidence="1">Prolyl-tRNA synthetase</fullName>
        <shortName evidence="1">ProRS</shortName>
    </alternativeName>
</protein>
<accession>Q9KYR6</accession>
<reference key="1">
    <citation type="journal article" date="2002" name="Nature">
        <title>Complete genome sequence of the model actinomycete Streptomyces coelicolor A3(2).</title>
        <authorList>
            <person name="Bentley S.D."/>
            <person name="Chater K.F."/>
            <person name="Cerdeno-Tarraga A.-M."/>
            <person name="Challis G.L."/>
            <person name="Thomson N.R."/>
            <person name="James K.D."/>
            <person name="Harris D.E."/>
            <person name="Quail M.A."/>
            <person name="Kieser H."/>
            <person name="Harper D."/>
            <person name="Bateman A."/>
            <person name="Brown S."/>
            <person name="Chandra G."/>
            <person name="Chen C.W."/>
            <person name="Collins M."/>
            <person name="Cronin A."/>
            <person name="Fraser A."/>
            <person name="Goble A."/>
            <person name="Hidalgo J."/>
            <person name="Hornsby T."/>
            <person name="Howarth S."/>
            <person name="Huang C.-H."/>
            <person name="Kieser T."/>
            <person name="Larke L."/>
            <person name="Murphy L.D."/>
            <person name="Oliver K."/>
            <person name="O'Neil S."/>
            <person name="Rabbinowitsch E."/>
            <person name="Rajandream M.A."/>
            <person name="Rutherford K.M."/>
            <person name="Rutter S."/>
            <person name="Seeger K."/>
            <person name="Saunders D."/>
            <person name="Sharp S."/>
            <person name="Squares R."/>
            <person name="Squares S."/>
            <person name="Taylor K."/>
            <person name="Warren T."/>
            <person name="Wietzorrek A."/>
            <person name="Woodward J.R."/>
            <person name="Barrell B.G."/>
            <person name="Parkhill J."/>
            <person name="Hopwood D.A."/>
        </authorList>
    </citation>
    <scope>NUCLEOTIDE SEQUENCE [LARGE SCALE GENOMIC DNA]</scope>
    <source>
        <strain>ATCC BAA-471 / A3(2) / M145</strain>
    </source>
</reference>
<gene>
    <name evidence="1" type="primary">proS</name>
    <name type="ordered locus">SCO5699</name>
    <name type="ORF">SC5H4.23</name>
</gene>
<keyword id="KW-0030">Aminoacyl-tRNA synthetase</keyword>
<keyword id="KW-0067">ATP-binding</keyword>
<keyword id="KW-0963">Cytoplasm</keyword>
<keyword id="KW-0436">Ligase</keyword>
<keyword id="KW-0547">Nucleotide-binding</keyword>
<keyword id="KW-0648">Protein biosynthesis</keyword>
<keyword id="KW-1185">Reference proteome</keyword>
<comment type="function">
    <text evidence="1">Catalyzes the attachment of proline to tRNA(Pro) in a two-step reaction: proline is first activated by ATP to form Pro-AMP and then transferred to the acceptor end of tRNA(Pro). As ProRS can inadvertently accommodate and process non-cognate amino acids such as alanine and cysteine, to avoid such errors it has two additional distinct editing activities against alanine. One activity is designated as 'pretransfer' editing and involves the tRNA(Pro)-independent hydrolysis of activated Ala-AMP. The other activity is designated 'posttransfer' editing and involves deacylation of mischarged Ala-tRNA(Pro). The misacylated Cys-tRNA(Pro) is not edited by ProRS.</text>
</comment>
<comment type="catalytic activity">
    <reaction evidence="1">
        <text>tRNA(Pro) + L-proline + ATP = L-prolyl-tRNA(Pro) + AMP + diphosphate</text>
        <dbReference type="Rhea" id="RHEA:14305"/>
        <dbReference type="Rhea" id="RHEA-COMP:9700"/>
        <dbReference type="Rhea" id="RHEA-COMP:9702"/>
        <dbReference type="ChEBI" id="CHEBI:30616"/>
        <dbReference type="ChEBI" id="CHEBI:33019"/>
        <dbReference type="ChEBI" id="CHEBI:60039"/>
        <dbReference type="ChEBI" id="CHEBI:78442"/>
        <dbReference type="ChEBI" id="CHEBI:78532"/>
        <dbReference type="ChEBI" id="CHEBI:456215"/>
        <dbReference type="EC" id="6.1.1.15"/>
    </reaction>
</comment>
<comment type="subunit">
    <text evidence="1">Homodimer.</text>
</comment>
<comment type="subcellular location">
    <subcellularLocation>
        <location evidence="1">Cytoplasm</location>
    </subcellularLocation>
</comment>
<comment type="domain">
    <text evidence="1">Consists of three domains: the N-terminal catalytic domain, the editing domain and the C-terminal anticodon-binding domain.</text>
</comment>
<comment type="similarity">
    <text evidence="1">Belongs to the class-II aminoacyl-tRNA synthetase family. ProS type 1 subfamily.</text>
</comment>
<evidence type="ECO:0000255" key="1">
    <source>
        <dbReference type="HAMAP-Rule" id="MF_01569"/>
    </source>
</evidence>
<name>SYP_STRCO</name>
<sequence>MANAPVQRMSKLMAKTLRDDPADAEVLSHKLLVRAGYVRRTAAGLWSWLPLGKKVLGNIERIVREEMDAIGAQEVQLPALLPREPYEATGRWQEYGPELFRLQDRKGGDYLLGPTHEEIFTLLVKDQASSYKDLPVILYQIQNKYRDEARPRAGILRGREFLMKDSYSFDVADEGLAESYALHRAAYQRIFERLGLDYRIVAATAGAMGGSKSEEFLAPAEAGEDTFADCPNCDYAANTEAITFRLTPVDATDVPAAEDIPTPDTPTIETLAASLGVEASATLKNLLVKVDGEIVAVGVPGDREVDMDKVEAHFAPAAVELVTAEDFVGRPDLVRGYVGPQGLGEKVTYIADPRVAPGTAWITGANKADTHAKNVVAGRDFEVDTYVDVVVVREGDPCPNCGTGLKLDRAIEIGHIFQLGRKYADALKLDVLGQNGKPARVTMGSYGIGVSRAVAALAEQHADDKGLVWSKEVAPADVHVVAAGKALQTELALEVSDKLAAAGVRVLVDDRAGVSPGVKFTDAELIGVPQILVAGRRSGEGVVELKDRRTGEREEVTVEEALTRLTS</sequence>
<proteinExistence type="inferred from homology"/>